<accession>P85437</accession>
<organism>
    <name type="scientific">Candida albicans</name>
    <name type="common">Yeast</name>
    <dbReference type="NCBI Taxonomy" id="5476"/>
    <lineage>
        <taxon>Eukaryota</taxon>
        <taxon>Fungi</taxon>
        <taxon>Dikarya</taxon>
        <taxon>Ascomycota</taxon>
        <taxon>Saccharomycotina</taxon>
        <taxon>Pichiomycetes</taxon>
        <taxon>Debaryomycetaceae</taxon>
        <taxon>Candida/Lodderomyces clade</taxon>
        <taxon>Candida</taxon>
    </lineage>
</organism>
<proteinExistence type="evidence at protein level"/>
<keyword id="KW-0130">Cell adhesion</keyword>
<keyword id="KW-0903">Direct protein sequencing</keyword>
<keyword id="KW-0964">Secreted</keyword>
<dbReference type="GO" id="GO:0005576">
    <property type="term" value="C:extracellular region"/>
    <property type="evidence" value="ECO:0007669"/>
    <property type="project" value="UniProtKB-SubCell"/>
</dbReference>
<dbReference type="GO" id="GO:0007155">
    <property type="term" value="P:cell adhesion"/>
    <property type="evidence" value="ECO:0007669"/>
    <property type="project" value="UniProtKB-KW"/>
</dbReference>
<evidence type="ECO:0000250" key="1"/>
<evidence type="ECO:0000269" key="2">
    <source>
    </source>
</evidence>
<reference key="1">
    <citation type="journal article" date="2008" name="J. Med. Microbiol.">
        <title>Antibody response to the 45 kDa Candida albicans antigen in an animal model and potential role of the antigen in adherence.</title>
        <authorList>
            <person name="Bujdakova H."/>
            <person name="Paulovicova E."/>
            <person name="Borecka-Melkusova S."/>
            <person name="Gasperik J."/>
            <person name="Kucharikova S."/>
            <person name="Kolecka A."/>
            <person name="Lell C."/>
            <person name="Jensen D.B."/>
            <person name="Wuerzner R."/>
            <person name="Chorvat D. Jr."/>
            <person name="Pichova I."/>
        </authorList>
    </citation>
    <scope>PROTEIN SEQUENCE</scope>
    <scope>FUNCTION</scope>
    <source>
        <strain>CCY 29-3-162</strain>
    </source>
</reference>
<sequence length="21" mass="2051">DINGGGATLPQALXQITGVIT</sequence>
<feature type="chain" id="PRO_0000322589" description="Complement receptor 3-related protein">
    <location>
        <begin position="1"/>
        <end position="21" status="greater than"/>
    </location>
</feature>
<feature type="non-terminal residue">
    <location>
        <position position="21"/>
    </location>
</feature>
<comment type="function">
    <text evidence="2">Plays a role in adherence of C.albicans to buccal epithelial cells, and in biofilm formation.</text>
</comment>
<comment type="subcellular location">
    <subcellularLocation>
        <location evidence="1">Secreted</location>
    </subcellularLocation>
</comment>
<protein>
    <recommendedName>
        <fullName>Complement receptor 3-related protein</fullName>
        <shortName>CR3-RP</shortName>
        <shortName>CR3-related protein</shortName>
    </recommendedName>
</protein>
<name>CR3RP_CANAX</name>